<reference key="1">
    <citation type="journal article" date="2001" name="Lancet">
        <title>Whole genome sequencing of meticillin-resistant Staphylococcus aureus.</title>
        <authorList>
            <person name="Kuroda M."/>
            <person name="Ohta T."/>
            <person name="Uchiyama I."/>
            <person name="Baba T."/>
            <person name="Yuzawa H."/>
            <person name="Kobayashi I."/>
            <person name="Cui L."/>
            <person name="Oguchi A."/>
            <person name="Aoki K."/>
            <person name="Nagai Y."/>
            <person name="Lian J.-Q."/>
            <person name="Ito T."/>
            <person name="Kanamori M."/>
            <person name="Matsumaru H."/>
            <person name="Maruyama A."/>
            <person name="Murakami H."/>
            <person name="Hosoyama A."/>
            <person name="Mizutani-Ui Y."/>
            <person name="Takahashi N.K."/>
            <person name="Sawano T."/>
            <person name="Inoue R."/>
            <person name="Kaito C."/>
            <person name="Sekimizu K."/>
            <person name="Hirakawa H."/>
            <person name="Kuhara S."/>
            <person name="Goto S."/>
            <person name="Yabuzaki J."/>
            <person name="Kanehisa M."/>
            <person name="Yamashita A."/>
            <person name="Oshima K."/>
            <person name="Furuya K."/>
            <person name="Yoshino C."/>
            <person name="Shiba T."/>
            <person name="Hattori M."/>
            <person name="Ogasawara N."/>
            <person name="Hayashi H."/>
            <person name="Hiramatsu K."/>
        </authorList>
    </citation>
    <scope>NUCLEOTIDE SEQUENCE [LARGE SCALE GENOMIC DNA]</scope>
    <source>
        <strain>N315</strain>
    </source>
</reference>
<reference key="2">
    <citation type="submission" date="2005-11" db="UniProtKB">
        <title>Shotgun proteomic analysis of total protein extract of S. aureus S30 versus N315.</title>
        <authorList>
            <person name="Stenz L."/>
        </authorList>
    </citation>
    <scope>IDENTIFICATION BY MASS SPECTROMETRY</scope>
</reference>
<reference key="3">
    <citation type="submission" date="2007-10" db="UniProtKB">
        <title>Shotgun proteomic analysis of total and membrane protein extracts of S. aureus strain N315.</title>
        <authorList>
            <person name="Vaezzadeh A.R."/>
            <person name="Deshusses J."/>
            <person name="Lescuyer P."/>
            <person name="Hochstrasser D.F."/>
        </authorList>
    </citation>
    <scope>IDENTIFICATION BY MASS SPECTROMETRY [LARGE SCALE ANALYSIS]</scope>
    <source>
        <strain>N315</strain>
    </source>
</reference>
<feature type="chain" id="PRO_0000299513" description="UPF0312 protein SA2479">
    <location>
        <begin position="1"/>
        <end position="171"/>
    </location>
</feature>
<organism>
    <name type="scientific">Staphylococcus aureus (strain N315)</name>
    <dbReference type="NCBI Taxonomy" id="158879"/>
    <lineage>
        <taxon>Bacteria</taxon>
        <taxon>Bacillati</taxon>
        <taxon>Bacillota</taxon>
        <taxon>Bacilli</taxon>
        <taxon>Bacillales</taxon>
        <taxon>Staphylococcaceae</taxon>
        <taxon>Staphylococcus</taxon>
    </lineage>
</organism>
<evidence type="ECO:0000305" key="1"/>
<protein>
    <recommendedName>
        <fullName>UPF0312 protein SA2479</fullName>
    </recommendedName>
</protein>
<sequence>MTNFTFDGAHSSLEFQIKHLMVSKVKGSFDQFDVAVEGDINDFSTLKATATIIPSSINTKNEARDNHLKSGDFFGTDEFDKITFETKSVTENKVVGDLTIKGITNEETFDVEFNGVSKNPMDGSQVTGVIVTGTINRENYGINFNQALETGGVMLGKDVKFEASAEFSISE</sequence>
<dbReference type="EMBL" id="BA000018">
    <property type="protein sequence ID" value="BAB43785.1"/>
    <property type="molecule type" value="Genomic_DNA"/>
</dbReference>
<dbReference type="PIR" id="G90077">
    <property type="entry name" value="G90077"/>
</dbReference>
<dbReference type="RefSeq" id="WP_000181124.1">
    <property type="nucleotide sequence ID" value="NC_002745.2"/>
</dbReference>
<dbReference type="SMR" id="Q7A339"/>
<dbReference type="EnsemblBacteria" id="BAB43785">
    <property type="protein sequence ID" value="BAB43785"/>
    <property type="gene ID" value="BAB43785"/>
</dbReference>
<dbReference type="KEGG" id="sau:SA2479"/>
<dbReference type="HOGENOM" id="CLU_071003_3_0_9"/>
<dbReference type="Gene3D" id="2.40.128.110">
    <property type="entry name" value="Lipid/polyisoprenoid-binding, YceI-like"/>
    <property type="match status" value="1"/>
</dbReference>
<dbReference type="InterPro" id="IPR007372">
    <property type="entry name" value="Lipid/polyisoprenoid-bd_YceI"/>
</dbReference>
<dbReference type="InterPro" id="IPR036761">
    <property type="entry name" value="TTHA0802/YceI-like_sf"/>
</dbReference>
<dbReference type="PANTHER" id="PTHR34406">
    <property type="entry name" value="PROTEIN YCEI"/>
    <property type="match status" value="1"/>
</dbReference>
<dbReference type="PANTHER" id="PTHR34406:SF1">
    <property type="entry name" value="PROTEIN YCEI"/>
    <property type="match status" value="1"/>
</dbReference>
<dbReference type="Pfam" id="PF04264">
    <property type="entry name" value="YceI"/>
    <property type="match status" value="1"/>
</dbReference>
<dbReference type="SMART" id="SM00867">
    <property type="entry name" value="YceI"/>
    <property type="match status" value="1"/>
</dbReference>
<dbReference type="SUPFAM" id="SSF101874">
    <property type="entry name" value="YceI-like"/>
    <property type="match status" value="1"/>
</dbReference>
<comment type="similarity">
    <text evidence="1">Belongs to the UPF0312 family.</text>
</comment>
<name>Y2479_STAAN</name>
<accession>Q7A339</accession>
<proteinExistence type="evidence at protein level"/>
<gene>
    <name type="ordered locus">SA2479</name>
</gene>